<evidence type="ECO:0000255" key="1"/>
<evidence type="ECO:0000269" key="2">
    <source>
    </source>
</evidence>
<evidence type="ECO:0000269" key="3">
    <source>
    </source>
</evidence>
<evidence type="ECO:0000269" key="4">
    <source>
    </source>
</evidence>
<evidence type="ECO:0000269" key="5">
    <source>
    </source>
</evidence>
<evidence type="ECO:0000269" key="6">
    <source>
    </source>
</evidence>
<evidence type="ECO:0000269" key="7">
    <source>
    </source>
</evidence>
<evidence type="ECO:0000269" key="8">
    <source>
    </source>
</evidence>
<evidence type="ECO:0000305" key="9"/>
<feature type="chain" id="PRO_0000096760" description="Non-classical export protein 2">
    <location>
        <begin position="1"/>
        <end position="173"/>
    </location>
</feature>
<feature type="topological domain" description="Cytoplasmic" evidence="1">
    <location>
        <begin position="1"/>
        <end position="10"/>
    </location>
</feature>
<feature type="transmembrane region" description="Helical" evidence="1">
    <location>
        <begin position="11"/>
        <end position="30"/>
    </location>
</feature>
<feature type="topological domain" description="Extracellular" evidence="1">
    <location>
        <begin position="31"/>
        <end position="37"/>
    </location>
</feature>
<feature type="transmembrane region" description="Helical" evidence="1">
    <location>
        <begin position="38"/>
        <end position="62"/>
    </location>
</feature>
<feature type="topological domain" description="Cytoplasmic" evidence="1">
    <location>
        <begin position="63"/>
        <end position="75"/>
    </location>
</feature>
<feature type="transmembrane region" description="Helical" evidence="1">
    <location>
        <begin position="76"/>
        <end position="93"/>
    </location>
</feature>
<feature type="topological domain" description="Extracellular" evidence="1">
    <location>
        <begin position="94"/>
        <end position="137"/>
    </location>
</feature>
<feature type="transmembrane region" description="Helical" evidence="1">
    <location>
        <begin position="138"/>
        <end position="157"/>
    </location>
</feature>
<feature type="topological domain" description="Cytoplasmic" evidence="1">
    <location>
        <begin position="158"/>
        <end position="173"/>
    </location>
</feature>
<name>NCE2_YEAST</name>
<keyword id="KW-1003">Cell membrane</keyword>
<keyword id="KW-0472">Membrane</keyword>
<keyword id="KW-0653">Protein transport</keyword>
<keyword id="KW-1185">Reference proteome</keyword>
<keyword id="KW-0812">Transmembrane</keyword>
<keyword id="KW-1133">Transmembrane helix</keyword>
<keyword id="KW-0813">Transport</keyword>
<accession>Q12207</accession>
<accession>D6W4E6</accession>
<dbReference type="EMBL" id="U41659">
    <property type="protein sequence ID" value="AAB05589.1"/>
    <property type="molecule type" value="mRNA"/>
</dbReference>
<dbReference type="EMBL" id="U65683">
    <property type="protein sequence ID" value="AAB06618.1"/>
    <property type="molecule type" value="Genomic_DNA"/>
</dbReference>
<dbReference type="EMBL" id="U40829">
    <property type="protein sequence ID" value="AAB68287.1"/>
    <property type="molecule type" value="Genomic_DNA"/>
</dbReference>
<dbReference type="EMBL" id="AY558523">
    <property type="protein sequence ID" value="AAS56849.1"/>
    <property type="molecule type" value="Genomic_DNA"/>
</dbReference>
<dbReference type="EMBL" id="BK006949">
    <property type="protein sequence ID" value="DAA11562.1"/>
    <property type="molecule type" value="Genomic_DNA"/>
</dbReference>
<dbReference type="PIR" id="S69036">
    <property type="entry name" value="S69036"/>
</dbReference>
<dbReference type="RefSeq" id="NP_015475.1">
    <property type="nucleotide sequence ID" value="NM_001184246.1"/>
</dbReference>
<dbReference type="SMR" id="Q12207"/>
<dbReference type="BioGRID" id="36317">
    <property type="interactions" value="109"/>
</dbReference>
<dbReference type="DIP" id="DIP-5397N"/>
<dbReference type="FunCoup" id="Q12207">
    <property type="interactions" value="141"/>
</dbReference>
<dbReference type="IntAct" id="Q12207">
    <property type="interactions" value="34"/>
</dbReference>
<dbReference type="STRING" id="4932.YPR149W"/>
<dbReference type="TCDB" id="8.A.148.1.1">
    <property type="family name" value="the plasma membrane organizing center, eisosome (eisosome) family"/>
</dbReference>
<dbReference type="TCDB" id="9.A.27.1.1">
    <property type="family name" value="the non-classical protein exporter (ncpe) family"/>
</dbReference>
<dbReference type="iPTMnet" id="Q12207"/>
<dbReference type="PaxDb" id="4932-YPR149W"/>
<dbReference type="PeptideAtlas" id="Q12207"/>
<dbReference type="TopDownProteomics" id="Q12207"/>
<dbReference type="EnsemblFungi" id="YPR149W_mRNA">
    <property type="protein sequence ID" value="YPR149W"/>
    <property type="gene ID" value="YPR149W"/>
</dbReference>
<dbReference type="GeneID" id="856272"/>
<dbReference type="KEGG" id="sce:YPR149W"/>
<dbReference type="AGR" id="SGD:S000006353"/>
<dbReference type="SGD" id="S000006353">
    <property type="gene designation" value="NCE102"/>
</dbReference>
<dbReference type="VEuPathDB" id="FungiDB:YPR149W"/>
<dbReference type="eggNOG" id="ENOG502RZW2">
    <property type="taxonomic scope" value="Eukaryota"/>
</dbReference>
<dbReference type="GeneTree" id="ENSGT00940000176512"/>
<dbReference type="HOGENOM" id="CLU_098356_1_0_1"/>
<dbReference type="InParanoid" id="Q12207"/>
<dbReference type="OMA" id="NSRINYC"/>
<dbReference type="OrthoDB" id="5423111at2759"/>
<dbReference type="BioCyc" id="YEAST:G3O-34281-MONOMER"/>
<dbReference type="BioGRID-ORCS" id="856272">
    <property type="hits" value="0 hits in 10 CRISPR screens"/>
</dbReference>
<dbReference type="ChiTaRS" id="NCE102">
    <property type="organism name" value="yeast"/>
</dbReference>
<dbReference type="PRO" id="PR:Q12207"/>
<dbReference type="Proteomes" id="UP000002311">
    <property type="component" value="Chromosome XVI"/>
</dbReference>
<dbReference type="RNAct" id="Q12207">
    <property type="molecule type" value="protein"/>
</dbReference>
<dbReference type="GO" id="GO:0071944">
    <property type="term" value="C:cell periphery"/>
    <property type="evidence" value="ECO:0007005"/>
    <property type="project" value="SGD"/>
</dbReference>
<dbReference type="GO" id="GO:0033101">
    <property type="term" value="C:cellular bud membrane"/>
    <property type="evidence" value="ECO:0000314"/>
    <property type="project" value="SGD"/>
</dbReference>
<dbReference type="GO" id="GO:0005737">
    <property type="term" value="C:cytoplasm"/>
    <property type="evidence" value="ECO:0007005"/>
    <property type="project" value="SGD"/>
</dbReference>
<dbReference type="GO" id="GO:0032126">
    <property type="term" value="C:eisosome"/>
    <property type="evidence" value="ECO:0000318"/>
    <property type="project" value="GO_Central"/>
</dbReference>
<dbReference type="GO" id="GO:0005783">
    <property type="term" value="C:endoplasmic reticulum"/>
    <property type="evidence" value="ECO:0007005"/>
    <property type="project" value="SGD"/>
</dbReference>
<dbReference type="GO" id="GO:0070250">
    <property type="term" value="C:mating projection membrane"/>
    <property type="evidence" value="ECO:0000314"/>
    <property type="project" value="SGD"/>
</dbReference>
<dbReference type="GO" id="GO:0016020">
    <property type="term" value="C:membrane"/>
    <property type="evidence" value="ECO:0000255"/>
    <property type="project" value="SGD"/>
</dbReference>
<dbReference type="GO" id="GO:0005739">
    <property type="term" value="C:mitochondrion"/>
    <property type="evidence" value="ECO:0007005"/>
    <property type="project" value="SGD"/>
</dbReference>
<dbReference type="GO" id="GO:0005886">
    <property type="term" value="C:plasma membrane"/>
    <property type="evidence" value="ECO:0000314"/>
    <property type="project" value="SGD"/>
</dbReference>
<dbReference type="GO" id="GO:0070941">
    <property type="term" value="P:eisosome assembly"/>
    <property type="evidence" value="ECO:0000315"/>
    <property type="project" value="SGD"/>
</dbReference>
<dbReference type="GO" id="GO:0007009">
    <property type="term" value="P:plasma membrane organization"/>
    <property type="evidence" value="ECO:0000315"/>
    <property type="project" value="SGD"/>
</dbReference>
<dbReference type="GO" id="GO:0072659">
    <property type="term" value="P:protein localization to plasma membrane"/>
    <property type="evidence" value="ECO:0000315"/>
    <property type="project" value="SGD"/>
</dbReference>
<dbReference type="GO" id="GO:0009306">
    <property type="term" value="P:protein secretion"/>
    <property type="evidence" value="ECO:0000315"/>
    <property type="project" value="SGD"/>
</dbReference>
<dbReference type="GO" id="GO:0060237">
    <property type="term" value="P:regulation of fungal-type cell wall organization"/>
    <property type="evidence" value="ECO:0000315"/>
    <property type="project" value="SGD"/>
</dbReference>
<dbReference type="GO" id="GO:0061091">
    <property type="term" value="P:regulation of phospholipid translocation"/>
    <property type="evidence" value="ECO:0000316"/>
    <property type="project" value="SGD"/>
</dbReference>
<dbReference type="GO" id="GO:0097576">
    <property type="term" value="P:vacuole fusion"/>
    <property type="evidence" value="ECO:0000315"/>
    <property type="project" value="SGD"/>
</dbReference>
<dbReference type="InterPro" id="IPR008253">
    <property type="entry name" value="Marvel"/>
</dbReference>
<dbReference type="InterPro" id="IPR052649">
    <property type="entry name" value="NCE102-like"/>
</dbReference>
<dbReference type="PANTHER" id="PTHR28165">
    <property type="entry name" value="NON-CLASSICAL EXPORT PROTEIN 2-RELATED"/>
    <property type="match status" value="1"/>
</dbReference>
<dbReference type="PANTHER" id="PTHR28165:SF1">
    <property type="entry name" value="NON-CLASSICAL EXPORT PROTEIN 2-RELATED"/>
    <property type="match status" value="1"/>
</dbReference>
<dbReference type="Pfam" id="PF01284">
    <property type="entry name" value="MARVEL"/>
    <property type="match status" value="1"/>
</dbReference>
<protein>
    <recommendedName>
        <fullName>Non-classical export protein 2</fullName>
    </recommendedName>
</protein>
<comment type="function">
    <text evidence="2 4 5 6 7 8">Involved in membrane organization. Required for the formation of membrane compartments of CAN1 (MCCs), localization of CAN1 at the MCCs and subsequent invagination of the plasma membrane at the MCCs sites. Involved in eisosome organization and might act as a sensor of sphingolipids that regulates plasma membrane function. Involved in a novel pathway of export of proteins that lack a cleavable signal sequence. It may be an accessory subunit to an essential core component of the non-classical export machinery. Non-classical export pathway also functions as an alternative clearance/detoxification pathway to eliminate damaged material, when the basic repair pathway is not sufficient.</text>
</comment>
<comment type="subcellular location">
    <subcellularLocation>
        <location evidence="2 3 5 6 7">Cell membrane</location>
        <topology evidence="2 3 5 6 7">Multi-pass membrane protein</topology>
    </subcellularLocation>
    <text>Associates with the ergosterol-rich membrane compartment of CAN1 (MCC). Accumulates in membrane domains at eisosomes.</text>
</comment>
<comment type="domain">
    <text evidence="7">The C terminus is necessary to target MCC-specific transporters into MCC and for the formation of the plasma membrane invaginations.</text>
</comment>
<comment type="similarity">
    <text evidence="9">Belongs to the NCE102 family.</text>
</comment>
<proteinExistence type="evidence at protein level"/>
<organism>
    <name type="scientific">Saccharomyces cerevisiae (strain ATCC 204508 / S288c)</name>
    <name type="common">Baker's yeast</name>
    <dbReference type="NCBI Taxonomy" id="559292"/>
    <lineage>
        <taxon>Eukaryota</taxon>
        <taxon>Fungi</taxon>
        <taxon>Dikarya</taxon>
        <taxon>Ascomycota</taxon>
        <taxon>Saccharomycotina</taxon>
        <taxon>Saccharomycetes</taxon>
        <taxon>Saccharomycetales</taxon>
        <taxon>Saccharomycetaceae</taxon>
        <taxon>Saccharomyces</taxon>
    </lineage>
</organism>
<gene>
    <name type="primary">NCE102</name>
    <name type="synonym">NCE2</name>
    <name type="synonym">RTG2S2</name>
    <name type="ordered locus">YPR149W</name>
    <name type="ORF">P9659.2</name>
</gene>
<sequence>MLALADNILRIINFLFLVISIGLISSLLNTQHRHSSRVNYCMFACAYGIFTDSLYGVFANFIEPLAWPLVLFTLDFLNFVFTFTAGTVLAVGIRAHSCNNSSYVDSNKITQGSGTRCRQAQAAVAFLYFSCAIFLAKTLMSVFNMISNGAFGSGSFSKRRRTGQVGVPTISQV</sequence>
<reference key="1">
    <citation type="journal article" date="1996" name="J. Cell Biol.">
        <title>A new pathway for protein export in Saccharomyces cerevisiae.</title>
        <authorList>
            <person name="Cleves A.E."/>
            <person name="Cooper D.N.W."/>
            <person name="Barondes S.H."/>
            <person name="Kelly R.B."/>
        </authorList>
    </citation>
    <scope>NUCLEOTIDE SEQUENCE [MRNA]</scope>
    <scope>FUNCTION</scope>
    <source>
        <strain>ATCC 26109 / X2180</strain>
    </source>
</reference>
<reference key="2">
    <citation type="submission" date="1996-07" db="EMBL/GenBank/DDBJ databases">
        <authorList>
            <person name="Jia Y."/>
            <person name="Li J.-P."/>
            <person name="Butow R.A."/>
        </authorList>
    </citation>
    <scope>NUCLEOTIDE SEQUENCE [GENOMIC DNA]</scope>
    <source>
        <strain>COP161U7</strain>
    </source>
</reference>
<reference key="3">
    <citation type="journal article" date="1997" name="Nature">
        <title>The nucleotide sequence of Saccharomyces cerevisiae chromosome XVI.</title>
        <authorList>
            <person name="Bussey H."/>
            <person name="Storms R.K."/>
            <person name="Ahmed A."/>
            <person name="Albermann K."/>
            <person name="Allen E."/>
            <person name="Ansorge W."/>
            <person name="Araujo R."/>
            <person name="Aparicio A."/>
            <person name="Barrell B.G."/>
            <person name="Badcock K."/>
            <person name="Benes V."/>
            <person name="Botstein D."/>
            <person name="Bowman S."/>
            <person name="Brueckner M."/>
            <person name="Carpenter J."/>
            <person name="Cherry J.M."/>
            <person name="Chung E."/>
            <person name="Churcher C.M."/>
            <person name="Coster F."/>
            <person name="Davis K."/>
            <person name="Davis R.W."/>
            <person name="Dietrich F.S."/>
            <person name="Delius H."/>
            <person name="DiPaolo T."/>
            <person name="Dubois E."/>
            <person name="Duesterhoeft A."/>
            <person name="Duncan M."/>
            <person name="Floeth M."/>
            <person name="Fortin N."/>
            <person name="Friesen J.D."/>
            <person name="Fritz C."/>
            <person name="Goffeau A."/>
            <person name="Hall J."/>
            <person name="Hebling U."/>
            <person name="Heumann K."/>
            <person name="Hilbert H."/>
            <person name="Hillier L.W."/>
            <person name="Hunicke-Smith S."/>
            <person name="Hyman R.W."/>
            <person name="Johnston M."/>
            <person name="Kalman S."/>
            <person name="Kleine K."/>
            <person name="Komp C."/>
            <person name="Kurdi O."/>
            <person name="Lashkari D."/>
            <person name="Lew H."/>
            <person name="Lin A."/>
            <person name="Lin D."/>
            <person name="Louis E.J."/>
            <person name="Marathe R."/>
            <person name="Messenguy F."/>
            <person name="Mewes H.-W."/>
            <person name="Mirtipati S."/>
            <person name="Moestl D."/>
            <person name="Mueller-Auer S."/>
            <person name="Namath A."/>
            <person name="Nentwich U."/>
            <person name="Oefner P."/>
            <person name="Pearson D."/>
            <person name="Petel F.X."/>
            <person name="Pohl T.M."/>
            <person name="Purnelle B."/>
            <person name="Rajandream M.A."/>
            <person name="Rechmann S."/>
            <person name="Rieger M."/>
            <person name="Riles L."/>
            <person name="Roberts D."/>
            <person name="Schaefer M."/>
            <person name="Scharfe M."/>
            <person name="Scherens B."/>
            <person name="Schramm S."/>
            <person name="Schroeder M."/>
            <person name="Sdicu A.-M."/>
            <person name="Tettelin H."/>
            <person name="Urrestarazu L.A."/>
            <person name="Ushinsky S."/>
            <person name="Vierendeels F."/>
            <person name="Vissers S."/>
            <person name="Voss H."/>
            <person name="Walsh S.V."/>
            <person name="Wambutt R."/>
            <person name="Wang Y."/>
            <person name="Wedler E."/>
            <person name="Wedler H."/>
            <person name="Winnett E."/>
            <person name="Zhong W.-W."/>
            <person name="Zollner A."/>
            <person name="Vo D.H."/>
            <person name="Hani J."/>
        </authorList>
    </citation>
    <scope>NUCLEOTIDE SEQUENCE [LARGE SCALE GENOMIC DNA]</scope>
    <source>
        <strain>ATCC 204508 / S288c</strain>
    </source>
</reference>
<reference key="4">
    <citation type="journal article" date="2014" name="G3 (Bethesda)">
        <title>The reference genome sequence of Saccharomyces cerevisiae: Then and now.</title>
        <authorList>
            <person name="Engel S.R."/>
            <person name="Dietrich F.S."/>
            <person name="Fisk D.G."/>
            <person name="Binkley G."/>
            <person name="Balakrishnan R."/>
            <person name="Costanzo M.C."/>
            <person name="Dwight S.S."/>
            <person name="Hitz B.C."/>
            <person name="Karra K."/>
            <person name="Nash R.S."/>
            <person name="Weng S."/>
            <person name="Wong E.D."/>
            <person name="Lloyd P."/>
            <person name="Skrzypek M.S."/>
            <person name="Miyasato S.R."/>
            <person name="Simison M."/>
            <person name="Cherry J.M."/>
        </authorList>
    </citation>
    <scope>GENOME REANNOTATION</scope>
    <source>
        <strain>ATCC 204508 / S288c</strain>
    </source>
</reference>
<reference key="5">
    <citation type="journal article" date="2007" name="Genome Res.">
        <title>Approaching a complete repository of sequence-verified protein-encoding clones for Saccharomyces cerevisiae.</title>
        <authorList>
            <person name="Hu Y."/>
            <person name="Rolfs A."/>
            <person name="Bhullar B."/>
            <person name="Murthy T.V.S."/>
            <person name="Zhu C."/>
            <person name="Berger M.F."/>
            <person name="Camargo A.A."/>
            <person name="Kelley F."/>
            <person name="McCarron S."/>
            <person name="Jepson D."/>
            <person name="Richardson A."/>
            <person name="Raphael J."/>
            <person name="Moreira D."/>
            <person name="Taycher E."/>
            <person name="Zuo D."/>
            <person name="Mohr S."/>
            <person name="Kane M.F."/>
            <person name="Williamson J."/>
            <person name="Simpson A.J.G."/>
            <person name="Bulyk M.L."/>
            <person name="Harlow E."/>
            <person name="Marsischky G."/>
            <person name="Kolodner R.D."/>
            <person name="LaBaer J."/>
        </authorList>
    </citation>
    <scope>NUCLEOTIDE SEQUENCE [GENOMIC DNA]</scope>
    <source>
        <strain>ATCC 204508 / S288c</strain>
    </source>
</reference>
<reference key="6">
    <citation type="journal article" date="2000" name="Proc. Natl. Acad. Sci. U.S.A.">
        <title>Lipid rafts function in biosynthetic delivery of proteins to the cell surface in yeast.</title>
        <authorList>
            <person name="Bagnat M."/>
            <person name="Keranen S."/>
            <person name="Shevchenko A."/>
            <person name="Shevchenko A."/>
            <person name="Simons K."/>
        </authorList>
    </citation>
    <scope>IDENTIFICATION BY MASS SPECTROMETRY</scope>
    <scope>SUBCELLULAR LOCATION</scope>
    <scope>FUNCTION</scope>
</reference>
<reference key="7">
    <citation type="journal article" date="2002" name="Proteomics">
        <title>Subproteomics: identification of plasma membrane proteins from the yeast Saccharomyces cerevisiae.</title>
        <authorList>
            <person name="Navarre C."/>
            <person name="Degand H."/>
            <person name="Bennett K.L."/>
            <person name="Crawford J.S."/>
            <person name="Moertz E."/>
            <person name="Boutry M."/>
        </authorList>
    </citation>
    <scope>SUBCELLULAR LOCATION</scope>
</reference>
<reference key="8">
    <citation type="journal article" date="2006" name="Proc. Natl. Acad. Sci. U.S.A.">
        <title>A global topology map of the Saccharomyces cerevisiae membrane proteome.</title>
        <authorList>
            <person name="Kim H."/>
            <person name="Melen K."/>
            <person name="Oesterberg M."/>
            <person name="von Heijne G."/>
        </authorList>
    </citation>
    <scope>TOPOLOGY [LARGE SCALE ANALYSIS]</scope>
    <source>
        <strain>ATCC 208353 / W303-1A</strain>
    </source>
</reference>
<reference key="9">
    <citation type="journal article" date="2007" name="Biogerontology">
        <title>Nonclassical export pathway: overexpression of NCE102 reduces protein and DNA damage and prolongs lifespan in an SGS1 deficient Saccharomyces cerevisiae.</title>
        <authorList>
            <person name="Desmyter L."/>
            <person name="Verstraelen J."/>
            <person name="Dewaele S."/>
            <person name="Libert C."/>
            <person name="Contreras R."/>
            <person name="Chen C."/>
        </authorList>
    </citation>
    <scope>FUNCTION</scope>
</reference>
<reference key="10">
    <citation type="journal article" date="2008" name="J. Cell Biol.">
        <title>Plasma membrane microdomains regulate turnover of transport proteins in yeast.</title>
        <authorList>
            <person name="Grossmann G."/>
            <person name="Malinsky J."/>
            <person name="Stahlschmidt W."/>
            <person name="Loibl M."/>
            <person name="Weig-Meckl I."/>
            <person name="Frommer W.B."/>
            <person name="Opekarova M."/>
            <person name="Tanner W."/>
        </authorList>
    </citation>
    <scope>FUNCTION</scope>
    <scope>SUBCELLULAR LOCATION</scope>
</reference>
<reference key="11">
    <citation type="journal article" date="2009" name="J. Cell Biol.">
        <title>A genome-wide screen for genes affecting eisosomes reveals Nce102 function in sphingolipid signaling.</title>
        <authorList>
            <person name="Frohlich F."/>
            <person name="Moreira K."/>
            <person name="Aguilar P.S."/>
            <person name="Hubner N.C."/>
            <person name="Mann M."/>
            <person name="Walter P."/>
            <person name="Walther T.C."/>
        </authorList>
    </citation>
    <scope>FUNCTION</scope>
    <scope>SUBCELLULAR LOCATION</scope>
</reference>
<reference key="12">
    <citation type="journal article" date="2010" name="Eukaryot. Cell">
        <title>C terminus of Nce102 determines the structure and function of microdomains in the Saccharomyces cerevisiae plasma membrane.</title>
        <authorList>
            <person name="Loibl M."/>
            <person name="Grossmann G."/>
            <person name="Stradalova V."/>
            <person name="Klingl A."/>
            <person name="Rachel R."/>
            <person name="Tanner W."/>
            <person name="Malinsky J."/>
            <person name="Opekarova M."/>
        </authorList>
    </citation>
    <scope>FUNCTION</scope>
    <scope>SUBCELLULAR LOCATION</scope>
    <scope>TOPOLOGY</scope>
    <scope>DOMAIN</scope>
</reference>
<reference key="13">
    <citation type="journal article" date="2012" name="Proc. Natl. Acad. Sci. U.S.A.">
        <title>N-terminal acetylome analyses and functional insights of the N-terminal acetyltransferase NatB.</title>
        <authorList>
            <person name="Van Damme P."/>
            <person name="Lasa M."/>
            <person name="Polevoda B."/>
            <person name="Gazquez C."/>
            <person name="Elosegui-Artola A."/>
            <person name="Kim D.S."/>
            <person name="De Juan-Pardo E."/>
            <person name="Demeyer K."/>
            <person name="Hole K."/>
            <person name="Larrea E."/>
            <person name="Timmerman E."/>
            <person name="Prieto J."/>
            <person name="Arnesen T."/>
            <person name="Sherman F."/>
            <person name="Gevaert K."/>
            <person name="Aldabe R."/>
        </authorList>
    </citation>
    <scope>IDENTIFICATION BY MASS SPECTROMETRY [LARGE SCALE ANALYSIS]</scope>
</reference>